<evidence type="ECO:0000250" key="1"/>
<evidence type="ECO:0000256" key="2">
    <source>
        <dbReference type="SAM" id="MobiDB-lite"/>
    </source>
</evidence>
<evidence type="ECO:0000305" key="3"/>
<comment type="function">
    <text evidence="1">Forms a fork protection complex (FPC) with TOF1 and which is required for chromosome segregation during meiosis and DNA damage repair. FPC coordinates leading and lagging strand synthesis and moves with the replication fork. FPC stabilizes replication forks in a configuration that is recognized by replication checkpoint sensors (By similarity).</text>
</comment>
<comment type="subunit">
    <text evidence="1">Component of the fork protection complex (FPC) consisting of TOF1 and CSM3.</text>
</comment>
<comment type="subcellular location">
    <subcellularLocation>
        <location evidence="1">Nucleus</location>
    </subcellularLocation>
</comment>
<comment type="similarity">
    <text evidence="3">Belongs to the CSM3 family.</text>
</comment>
<reference key="1">
    <citation type="submission" date="2005-01" db="EMBL/GenBank/DDBJ databases">
        <title>The sequence of Magnaporthe grisea chromosome 7.</title>
        <authorList>
            <person name="Thon M.R."/>
            <person name="Pan H."/>
            <person name="Diener A."/>
            <person name="Papalas J."/>
            <person name="Taro A."/>
            <person name="Mitchell T.K."/>
            <person name="Dean R.A."/>
        </authorList>
    </citation>
    <scope>NUCLEOTIDE SEQUENCE [LARGE SCALE GENOMIC DNA]</scope>
    <source>
        <strain>70-15 / ATCC MYA-4617 / FGSC 8958</strain>
    </source>
</reference>
<reference key="2">
    <citation type="journal article" date="2005" name="Nature">
        <title>The genome sequence of the rice blast fungus Magnaporthe grisea.</title>
        <authorList>
            <person name="Dean R.A."/>
            <person name="Talbot N.J."/>
            <person name="Ebbole D.J."/>
            <person name="Farman M.L."/>
            <person name="Mitchell T.K."/>
            <person name="Orbach M.J."/>
            <person name="Thon M.R."/>
            <person name="Kulkarni R."/>
            <person name="Xu J.-R."/>
            <person name="Pan H."/>
            <person name="Read N.D."/>
            <person name="Lee Y.-H."/>
            <person name="Carbone I."/>
            <person name="Brown D."/>
            <person name="Oh Y.Y."/>
            <person name="Donofrio N."/>
            <person name="Jeong J.S."/>
            <person name="Soanes D.M."/>
            <person name="Djonovic S."/>
            <person name="Kolomiets E."/>
            <person name="Rehmeyer C."/>
            <person name="Li W."/>
            <person name="Harding M."/>
            <person name="Kim S."/>
            <person name="Lebrun M.-H."/>
            <person name="Bohnert H."/>
            <person name="Coughlan S."/>
            <person name="Butler J."/>
            <person name="Calvo S.E."/>
            <person name="Ma L.-J."/>
            <person name="Nicol R."/>
            <person name="Purcell S."/>
            <person name="Nusbaum C."/>
            <person name="Galagan J.E."/>
            <person name="Birren B.W."/>
        </authorList>
    </citation>
    <scope>NUCLEOTIDE SEQUENCE [LARGE SCALE GENOMIC DNA]</scope>
    <source>
        <strain>70-15 / ATCC MYA-4617 / FGSC 8958</strain>
    </source>
</reference>
<accession>A4RCW0</accession>
<accession>G4NKF7</accession>
<accession>Q2KH17</accession>
<feature type="chain" id="PRO_0000301720" description="Chromosome segregation in meiosis protein 3">
    <location>
        <begin position="1"/>
        <end position="357"/>
    </location>
</feature>
<feature type="region of interest" description="Disordered" evidence="2">
    <location>
        <begin position="1"/>
        <end position="58"/>
    </location>
</feature>
<feature type="region of interest" description="Disordered" evidence="2">
    <location>
        <begin position="255"/>
        <end position="357"/>
    </location>
</feature>
<feature type="compositionally biased region" description="Polar residues" evidence="2">
    <location>
        <begin position="30"/>
        <end position="39"/>
    </location>
</feature>
<feature type="compositionally biased region" description="Polar residues" evidence="2">
    <location>
        <begin position="267"/>
        <end position="276"/>
    </location>
</feature>
<feature type="compositionally biased region" description="Acidic residues" evidence="2">
    <location>
        <begin position="344"/>
        <end position="357"/>
    </location>
</feature>
<gene>
    <name type="primary">CSM3</name>
    <name type="ORF">MGCH7_ch7g168</name>
    <name type="ORF">MGG_09005</name>
</gene>
<organism>
    <name type="scientific">Pyricularia oryzae (strain 70-15 / ATCC MYA-4617 / FGSC 8958)</name>
    <name type="common">Rice blast fungus</name>
    <name type="synonym">Magnaporthe oryzae</name>
    <dbReference type="NCBI Taxonomy" id="242507"/>
    <lineage>
        <taxon>Eukaryota</taxon>
        <taxon>Fungi</taxon>
        <taxon>Dikarya</taxon>
        <taxon>Ascomycota</taxon>
        <taxon>Pezizomycotina</taxon>
        <taxon>Sordariomycetes</taxon>
        <taxon>Sordariomycetidae</taxon>
        <taxon>Magnaporthales</taxon>
        <taxon>Pyriculariaceae</taxon>
        <taxon>Pyricularia</taxon>
    </lineage>
</organism>
<sequence>MSTSKAKQPSVPALDNYIPDDEDFFDPFASPTNSPNQSPKAKGGAKRSEPDGGLGIDEEVSVAKRARVPRVKLDETRLLSDKGIPALRKRAGTLRLKGKGHEFSDAARLLSFYQLWLDDLFPKAKFLDALAMVEKAGHKTTMHKARTDWINDLKPNMTAPDNDGHADIGHAPVAQPQSSRIAPIFEKRQTIDASTMPAEDSNGVDDLFGGDDLGEMYDVTPKATRPVGEPDDDDIEALMAEAESSIRQPAPIAMSLFGSGRPAKTGTEAQRANGSPNDEDLDAVMAEAEVHTVSHGSSTARKQRAQTDPGNDDDDLEALIAEAEGVLKQKPAPSHKTKDKTSSFDDEEAAMAELDLW</sequence>
<keyword id="KW-0131">Cell cycle</keyword>
<keyword id="KW-0227">DNA damage</keyword>
<keyword id="KW-0234">DNA repair</keyword>
<keyword id="KW-0236">DNA replication inhibitor</keyword>
<keyword id="KW-0469">Meiosis</keyword>
<keyword id="KW-0539">Nucleus</keyword>
<keyword id="KW-1185">Reference proteome</keyword>
<dbReference type="EMBL" id="CM000230">
    <property type="protein sequence ID" value="EAQ70761.1"/>
    <property type="molecule type" value="Genomic_DNA"/>
</dbReference>
<dbReference type="EMBL" id="CM001237">
    <property type="protein sequence ID" value="EHA46593.1"/>
    <property type="molecule type" value="Genomic_DNA"/>
</dbReference>
<dbReference type="RefSeq" id="XP_003721336.1">
    <property type="nucleotide sequence ID" value="XM_003721288.1"/>
</dbReference>
<dbReference type="SMR" id="A4RCW0"/>
<dbReference type="STRING" id="242507.A4RCW0"/>
<dbReference type="EnsemblFungi" id="MGG_09005T0">
    <property type="protein sequence ID" value="MGG_09005T0"/>
    <property type="gene ID" value="MGG_09005"/>
</dbReference>
<dbReference type="GeneID" id="2680128"/>
<dbReference type="KEGG" id="mgr:MGG_09005"/>
<dbReference type="VEuPathDB" id="FungiDB:MGG_09005"/>
<dbReference type="eggNOG" id="KOG3004">
    <property type="taxonomic scope" value="Eukaryota"/>
</dbReference>
<dbReference type="HOGENOM" id="CLU_036204_1_0_1"/>
<dbReference type="InParanoid" id="A4RCW0"/>
<dbReference type="OMA" id="RMDWINE"/>
<dbReference type="OrthoDB" id="437078at2759"/>
<dbReference type="Proteomes" id="UP000009058">
    <property type="component" value="Chromosome 7"/>
</dbReference>
<dbReference type="GO" id="GO:0031298">
    <property type="term" value="C:replication fork protection complex"/>
    <property type="evidence" value="ECO:0007669"/>
    <property type="project" value="TreeGrafter"/>
</dbReference>
<dbReference type="GO" id="GO:0003677">
    <property type="term" value="F:DNA binding"/>
    <property type="evidence" value="ECO:0007669"/>
    <property type="project" value="TreeGrafter"/>
</dbReference>
<dbReference type="GO" id="GO:0006281">
    <property type="term" value="P:DNA repair"/>
    <property type="evidence" value="ECO:0007669"/>
    <property type="project" value="UniProtKB-KW"/>
</dbReference>
<dbReference type="GO" id="GO:0000076">
    <property type="term" value="P:DNA replication checkpoint signaling"/>
    <property type="evidence" value="ECO:0007669"/>
    <property type="project" value="InterPro"/>
</dbReference>
<dbReference type="GO" id="GO:0051321">
    <property type="term" value="P:meiotic cell cycle"/>
    <property type="evidence" value="ECO:0007669"/>
    <property type="project" value="UniProtKB-KW"/>
</dbReference>
<dbReference type="GO" id="GO:0043111">
    <property type="term" value="P:replication fork arrest"/>
    <property type="evidence" value="ECO:0007669"/>
    <property type="project" value="TreeGrafter"/>
</dbReference>
<dbReference type="GO" id="GO:0031297">
    <property type="term" value="P:replication fork processing"/>
    <property type="evidence" value="ECO:0007669"/>
    <property type="project" value="InterPro"/>
</dbReference>
<dbReference type="InterPro" id="IPR012923">
    <property type="entry name" value="Csm3"/>
</dbReference>
<dbReference type="InterPro" id="IPR040038">
    <property type="entry name" value="TIPIN/Csm3/Swi3"/>
</dbReference>
<dbReference type="PANTHER" id="PTHR13220">
    <property type="entry name" value="TIMELESS INTERACTING-RELATED"/>
    <property type="match status" value="1"/>
</dbReference>
<dbReference type="PANTHER" id="PTHR13220:SF11">
    <property type="entry name" value="TIMELESS-INTERACTING PROTEIN"/>
    <property type="match status" value="1"/>
</dbReference>
<dbReference type="Pfam" id="PF07962">
    <property type="entry name" value="Swi3"/>
    <property type="match status" value="1"/>
</dbReference>
<protein>
    <recommendedName>
        <fullName>Chromosome segregation in meiosis protein 3</fullName>
    </recommendedName>
</protein>
<proteinExistence type="inferred from homology"/>
<name>CSM3_PYRO7</name>